<sequence length="407" mass="46602">MSHVRRKRITAIYSTSMKDDNAMIVKSHSSKESKRDPRVELSDNEYISNDEKDSTDAKPAADEPQLELNCSSSLSSSDDDSSVSSSISSSSELDALSEPGLSSPNAVPLVYKVPHESSKAIQVARRLENIHASVQKDDDYMPKLCINKSMVFTDRQDQVAEYERLLEIRLKYKNAFKVPPTLFADQLLSKAEKYIPLVEEILRGERPSMYYDNARKAYQKSSRALLSVEEFRQLDLKTFTAGYFGIKRQIRLSTEILSQYQDKLSKHRNPTVQWWGPTDFSHYVLAPEILSYVCRDELGLADIDEAWTYMESTTEYGLNVADEEPLDIWELEYEEKKLQRLGLGPKYSSMTYRKHPARASAVVDTSKNGSKEHKRKGKQHKLKKGQQSTKIRVSKKRRRVQPHSICD</sequence>
<proteinExistence type="inferred from homology"/>
<comment type="function">
    <text evidence="1">May be involved in a process influencing telomere capping.</text>
</comment>
<comment type="subcellular location">
    <subcellularLocation>
        <location evidence="1">Cytoplasm</location>
    </subcellularLocation>
    <subcellularLocation>
        <location evidence="1">Nucleus</location>
    </subcellularLocation>
</comment>
<comment type="similarity">
    <text evidence="3">Belongs to the RTC4 family.</text>
</comment>
<keyword id="KW-0963">Cytoplasm</keyword>
<keyword id="KW-0539">Nucleus</keyword>
<keyword id="KW-1185">Reference proteome</keyword>
<evidence type="ECO:0000250" key="1"/>
<evidence type="ECO:0000256" key="2">
    <source>
        <dbReference type="SAM" id="MobiDB-lite"/>
    </source>
</evidence>
<evidence type="ECO:0000305" key="3"/>
<accession>Q752E4</accession>
<gene>
    <name type="primary">RTC4</name>
    <name type="ordered locus">AFR632C</name>
</gene>
<feature type="chain" id="PRO_0000408794" description="Restriction of telomere capping protein 4">
    <location>
        <begin position="1"/>
        <end position="407"/>
    </location>
</feature>
<feature type="region of interest" description="Disordered" evidence="2">
    <location>
        <begin position="17"/>
        <end position="100"/>
    </location>
</feature>
<feature type="region of interest" description="Disordered" evidence="2">
    <location>
        <begin position="354"/>
        <end position="407"/>
    </location>
</feature>
<feature type="compositionally biased region" description="Basic and acidic residues" evidence="2">
    <location>
        <begin position="29"/>
        <end position="41"/>
    </location>
</feature>
<feature type="compositionally biased region" description="Basic and acidic residues" evidence="2">
    <location>
        <begin position="49"/>
        <end position="61"/>
    </location>
</feature>
<feature type="compositionally biased region" description="Low complexity" evidence="2">
    <location>
        <begin position="71"/>
        <end position="97"/>
    </location>
</feature>
<feature type="compositionally biased region" description="Basic residues" evidence="2">
    <location>
        <begin position="372"/>
        <end position="384"/>
    </location>
</feature>
<feature type="compositionally biased region" description="Basic residues" evidence="2">
    <location>
        <begin position="392"/>
        <end position="401"/>
    </location>
</feature>
<organism>
    <name type="scientific">Eremothecium gossypii (strain ATCC 10895 / CBS 109.51 / FGSC 9923 / NRRL Y-1056)</name>
    <name type="common">Yeast</name>
    <name type="synonym">Ashbya gossypii</name>
    <dbReference type="NCBI Taxonomy" id="284811"/>
    <lineage>
        <taxon>Eukaryota</taxon>
        <taxon>Fungi</taxon>
        <taxon>Dikarya</taxon>
        <taxon>Ascomycota</taxon>
        <taxon>Saccharomycotina</taxon>
        <taxon>Saccharomycetes</taxon>
        <taxon>Saccharomycetales</taxon>
        <taxon>Saccharomycetaceae</taxon>
        <taxon>Eremothecium</taxon>
    </lineage>
</organism>
<dbReference type="EMBL" id="AE016819">
    <property type="protein sequence ID" value="AAS54003.2"/>
    <property type="molecule type" value="Genomic_DNA"/>
</dbReference>
<dbReference type="RefSeq" id="NP_986179.2">
    <property type="nucleotide sequence ID" value="NM_212315.2"/>
</dbReference>
<dbReference type="FunCoup" id="Q752E4">
    <property type="interactions" value="28"/>
</dbReference>
<dbReference type="STRING" id="284811.Q752E4"/>
<dbReference type="EnsemblFungi" id="AAS54003">
    <property type="protein sequence ID" value="AAS54003"/>
    <property type="gene ID" value="AGOS_AFR632C"/>
</dbReference>
<dbReference type="GeneID" id="4622467"/>
<dbReference type="KEGG" id="ago:AGOS_AFR632C"/>
<dbReference type="eggNOG" id="ENOG502S1RG">
    <property type="taxonomic scope" value="Eukaryota"/>
</dbReference>
<dbReference type="HOGENOM" id="CLU_677876_0_0_1"/>
<dbReference type="InParanoid" id="Q752E4"/>
<dbReference type="OMA" id="SMYYDNA"/>
<dbReference type="OrthoDB" id="128308at2759"/>
<dbReference type="Proteomes" id="UP000000591">
    <property type="component" value="Chromosome VI"/>
</dbReference>
<dbReference type="GO" id="GO:0005737">
    <property type="term" value="C:cytoplasm"/>
    <property type="evidence" value="ECO:0007669"/>
    <property type="project" value="UniProtKB-SubCell"/>
</dbReference>
<dbReference type="GO" id="GO:0005634">
    <property type="term" value="C:nucleus"/>
    <property type="evidence" value="ECO:0007669"/>
    <property type="project" value="UniProtKB-SubCell"/>
</dbReference>
<dbReference type="InterPro" id="IPR039024">
    <property type="entry name" value="RTC4"/>
</dbReference>
<dbReference type="InterPro" id="IPR028094">
    <property type="entry name" value="RTC4_C"/>
</dbReference>
<dbReference type="PANTHER" id="PTHR41391">
    <property type="entry name" value="RESTRICTION OF TELOMERE CAPPING PROTEIN 4"/>
    <property type="match status" value="1"/>
</dbReference>
<dbReference type="PANTHER" id="PTHR41391:SF1">
    <property type="entry name" value="RESTRICTION OF TELOMERE CAPPING PROTEIN 4"/>
    <property type="match status" value="1"/>
</dbReference>
<dbReference type="Pfam" id="PF14474">
    <property type="entry name" value="RTC4"/>
    <property type="match status" value="1"/>
</dbReference>
<dbReference type="SMART" id="SM01312">
    <property type="entry name" value="RTC4"/>
    <property type="match status" value="1"/>
</dbReference>
<reference key="1">
    <citation type="journal article" date="2004" name="Science">
        <title>The Ashbya gossypii genome as a tool for mapping the ancient Saccharomyces cerevisiae genome.</title>
        <authorList>
            <person name="Dietrich F.S."/>
            <person name="Voegeli S."/>
            <person name="Brachat S."/>
            <person name="Lerch A."/>
            <person name="Gates K."/>
            <person name="Steiner S."/>
            <person name="Mohr C."/>
            <person name="Poehlmann R."/>
            <person name="Luedi P."/>
            <person name="Choi S."/>
            <person name="Wing R.A."/>
            <person name="Flavier A."/>
            <person name="Gaffney T.D."/>
            <person name="Philippsen P."/>
        </authorList>
    </citation>
    <scope>NUCLEOTIDE SEQUENCE [LARGE SCALE GENOMIC DNA]</scope>
    <source>
        <strain>ATCC 10895 / CBS 109.51 / FGSC 9923 / NRRL Y-1056</strain>
    </source>
</reference>
<reference key="2">
    <citation type="journal article" date="2013" name="G3 (Bethesda)">
        <title>Genomes of Ashbya fungi isolated from insects reveal four mating-type loci, numerous translocations, lack of transposons, and distinct gene duplications.</title>
        <authorList>
            <person name="Dietrich F.S."/>
            <person name="Voegeli S."/>
            <person name="Kuo S."/>
            <person name="Philippsen P."/>
        </authorList>
    </citation>
    <scope>GENOME REANNOTATION</scope>
    <source>
        <strain>ATCC 10895 / CBS 109.51 / FGSC 9923 / NRRL Y-1056</strain>
    </source>
</reference>
<protein>
    <recommendedName>
        <fullName>Restriction of telomere capping protein 4</fullName>
    </recommendedName>
</protein>
<name>RTC4_EREGS</name>